<keyword id="KW-1185">Reference proteome</keyword>
<protein>
    <recommendedName>
        <fullName>UPF0251 protein MA_1017</fullName>
    </recommendedName>
</protein>
<organism>
    <name type="scientific">Methanosarcina acetivorans (strain ATCC 35395 / DSM 2834 / JCM 12185 / C2A)</name>
    <dbReference type="NCBI Taxonomy" id="188937"/>
    <lineage>
        <taxon>Archaea</taxon>
        <taxon>Methanobacteriati</taxon>
        <taxon>Methanobacteriota</taxon>
        <taxon>Stenosarchaea group</taxon>
        <taxon>Methanomicrobia</taxon>
        <taxon>Methanosarcinales</taxon>
        <taxon>Methanosarcinaceae</taxon>
        <taxon>Methanosarcina</taxon>
    </lineage>
</organism>
<proteinExistence type="inferred from homology"/>
<dbReference type="EMBL" id="AE010299">
    <property type="protein sequence ID" value="AAM04447.1"/>
    <property type="molecule type" value="Genomic_DNA"/>
</dbReference>
<dbReference type="RefSeq" id="WP_011021052.1">
    <property type="nucleotide sequence ID" value="NC_003552.1"/>
</dbReference>
<dbReference type="STRING" id="188937.MA_1017"/>
<dbReference type="EnsemblBacteria" id="AAM04447">
    <property type="protein sequence ID" value="AAM04447"/>
    <property type="gene ID" value="MA_1017"/>
</dbReference>
<dbReference type="GeneID" id="95969540"/>
<dbReference type="KEGG" id="mac:MA_1017"/>
<dbReference type="HOGENOM" id="CLU_094511_0_2_2"/>
<dbReference type="InParanoid" id="Q8TRZ3"/>
<dbReference type="OrthoDB" id="74471at2157"/>
<dbReference type="PhylomeDB" id="Q8TRZ3"/>
<dbReference type="Proteomes" id="UP000002487">
    <property type="component" value="Chromosome"/>
</dbReference>
<dbReference type="Gene3D" id="1.10.10.10">
    <property type="entry name" value="Winged helix-like DNA-binding domain superfamily/Winged helix DNA-binding domain"/>
    <property type="match status" value="1"/>
</dbReference>
<dbReference type="HAMAP" id="MF_00674">
    <property type="entry name" value="UPF0251"/>
    <property type="match status" value="1"/>
</dbReference>
<dbReference type="InterPro" id="IPR013324">
    <property type="entry name" value="RNA_pol_sigma_r3/r4-like"/>
</dbReference>
<dbReference type="InterPro" id="IPR002852">
    <property type="entry name" value="UPF0251"/>
</dbReference>
<dbReference type="InterPro" id="IPR036388">
    <property type="entry name" value="WH-like_DNA-bd_sf"/>
</dbReference>
<dbReference type="PANTHER" id="PTHR37478">
    <property type="match status" value="1"/>
</dbReference>
<dbReference type="PANTHER" id="PTHR37478:SF2">
    <property type="entry name" value="UPF0251 PROTEIN TK0562"/>
    <property type="match status" value="1"/>
</dbReference>
<dbReference type="Pfam" id="PF02001">
    <property type="entry name" value="DUF134"/>
    <property type="match status" value="1"/>
</dbReference>
<dbReference type="SUPFAM" id="SSF88659">
    <property type="entry name" value="Sigma3 and sigma4 domains of RNA polymerase sigma factors"/>
    <property type="match status" value="1"/>
</dbReference>
<name>Y1017_METAC</name>
<comment type="similarity">
    <text evidence="1">Belongs to the UPF0251 family.</text>
</comment>
<sequence>MVNKVKRRVSCFPKATYYKPREIPLCCLEIANISIEELEAIRLCDLLQIEQNEAADRMGISRKTFWSDLQRARQKVADALVNGKAIEISGGEYINTGECRVNFLCKECDHMWEPKFDQNRPTNCPSCGSSLIFRLGGDGRGKRFVENDYCCPKEKGSSRNTSEGSKKKLQ</sequence>
<evidence type="ECO:0000305" key="1"/>
<gene>
    <name type="ordered locus">MA_1017</name>
</gene>
<feature type="chain" id="PRO_0000147574" description="UPF0251 protein MA_1017">
    <location>
        <begin position="1"/>
        <end position="170"/>
    </location>
</feature>
<accession>Q8TRZ3</accession>
<reference key="1">
    <citation type="journal article" date="2002" name="Genome Res.">
        <title>The genome of Methanosarcina acetivorans reveals extensive metabolic and physiological diversity.</title>
        <authorList>
            <person name="Galagan J.E."/>
            <person name="Nusbaum C."/>
            <person name="Roy A."/>
            <person name="Endrizzi M.G."/>
            <person name="Macdonald P."/>
            <person name="FitzHugh W."/>
            <person name="Calvo S."/>
            <person name="Engels R."/>
            <person name="Smirnov S."/>
            <person name="Atnoor D."/>
            <person name="Brown A."/>
            <person name="Allen N."/>
            <person name="Naylor J."/>
            <person name="Stange-Thomann N."/>
            <person name="DeArellano K."/>
            <person name="Johnson R."/>
            <person name="Linton L."/>
            <person name="McEwan P."/>
            <person name="McKernan K."/>
            <person name="Talamas J."/>
            <person name="Tirrell A."/>
            <person name="Ye W."/>
            <person name="Zimmer A."/>
            <person name="Barber R.D."/>
            <person name="Cann I."/>
            <person name="Graham D.E."/>
            <person name="Grahame D.A."/>
            <person name="Guss A.M."/>
            <person name="Hedderich R."/>
            <person name="Ingram-Smith C."/>
            <person name="Kuettner H.C."/>
            <person name="Krzycki J.A."/>
            <person name="Leigh J.A."/>
            <person name="Li W."/>
            <person name="Liu J."/>
            <person name="Mukhopadhyay B."/>
            <person name="Reeve J.N."/>
            <person name="Smith K."/>
            <person name="Springer T.A."/>
            <person name="Umayam L.A."/>
            <person name="White O."/>
            <person name="White R.H."/>
            <person name="de Macario E.C."/>
            <person name="Ferry J.G."/>
            <person name="Jarrell K.F."/>
            <person name="Jing H."/>
            <person name="Macario A.J.L."/>
            <person name="Paulsen I.T."/>
            <person name="Pritchett M."/>
            <person name="Sowers K.R."/>
            <person name="Swanson R.V."/>
            <person name="Zinder S.H."/>
            <person name="Lander E."/>
            <person name="Metcalf W.W."/>
            <person name="Birren B."/>
        </authorList>
    </citation>
    <scope>NUCLEOTIDE SEQUENCE [LARGE SCALE GENOMIC DNA]</scope>
    <source>
        <strain>ATCC 35395 / DSM 2834 / JCM 12185 / C2A</strain>
    </source>
</reference>